<comment type="function">
    <text evidence="1">Photosystem II (PSII) is a light-driven water:plastoquinone oxidoreductase that uses light energy to abstract electrons from H(2)O, generating O(2) and a proton gradient subsequently used for ATP formation. It consists of a core antenna complex that captures photons, and an electron transfer chain that converts photonic excitation into a charge separation. The D1/D2 (PsbA/PsbD) reaction center heterodimer binds P680, the primary electron donor of PSII as well as several subsequent electron acceptors.</text>
</comment>
<comment type="catalytic activity">
    <reaction evidence="1">
        <text>2 a plastoquinone + 4 hnu + 2 H2O = 2 a plastoquinol + O2</text>
        <dbReference type="Rhea" id="RHEA:36359"/>
        <dbReference type="Rhea" id="RHEA-COMP:9561"/>
        <dbReference type="Rhea" id="RHEA-COMP:9562"/>
        <dbReference type="ChEBI" id="CHEBI:15377"/>
        <dbReference type="ChEBI" id="CHEBI:15379"/>
        <dbReference type="ChEBI" id="CHEBI:17757"/>
        <dbReference type="ChEBI" id="CHEBI:30212"/>
        <dbReference type="ChEBI" id="CHEBI:62192"/>
        <dbReference type="EC" id="1.10.3.9"/>
    </reaction>
</comment>
<comment type="cofactor">
    <text evidence="1">The D1/D2 heterodimer binds P680, chlorophylls that are the primary electron donor of PSII, and subsequent electron acceptors. It shares a non-heme iron and each subunit binds pheophytin, quinone, additional chlorophylls, carotenoids and lipids. D1 provides most of the ligands for the Mn4-Ca-O5 cluster of the oxygen-evolving complex (OEC). There is also a Cl(-1) ion associated with D1 and D2, which is required for oxygen evolution. The PSII complex binds additional chlorophylls, carotenoids and specific lipids.</text>
</comment>
<comment type="subunit">
    <text evidence="1">PSII is composed of 1 copy each of membrane proteins PsbA, PsbB, PsbC, PsbD, PsbE, PsbF, PsbH, PsbI, PsbJ, PsbK, PsbL, PsbM, PsbT, PsbX, PsbY, PsbZ, Psb30/Ycf12, at least 3 peripheral proteins of the oxygen-evolving complex and a large number of cofactors. It forms dimeric complexes.</text>
</comment>
<comment type="subcellular location">
    <subcellularLocation>
        <location evidence="1">Plastid</location>
        <location evidence="1">Chloroplast thylakoid membrane</location>
        <topology evidence="1">Multi-pass membrane protein</topology>
    </subcellularLocation>
</comment>
<comment type="PTM">
    <text evidence="1">Tyr-161 forms a radical intermediate that is referred to as redox-active TyrZ, YZ or Y-Z.</text>
</comment>
<comment type="PTM">
    <text evidence="1">C-terminally processed by CTPA; processing is essential to allow assembly of the oxygen-evolving complex and thus photosynthetic growth.</text>
</comment>
<comment type="miscellaneous">
    <text evidence="1">2 of the reaction center chlorophylls (ChlD1 and ChlD2) are entirely coordinated by water.</text>
</comment>
<comment type="miscellaneous">
    <text evidence="1">Herbicides such as atrazine, BNT, diuron or ioxynil bind in the Q(B) binding site and block subsequent electron transfer.</text>
</comment>
<comment type="similarity">
    <text evidence="1">Belongs to the reaction center PufL/M/PsbA/D family.</text>
</comment>
<organism>
    <name type="scientific">Panax ginseng</name>
    <name type="common">Korean ginseng</name>
    <dbReference type="NCBI Taxonomy" id="4054"/>
    <lineage>
        <taxon>Eukaryota</taxon>
        <taxon>Viridiplantae</taxon>
        <taxon>Streptophyta</taxon>
        <taxon>Embryophyta</taxon>
        <taxon>Tracheophyta</taxon>
        <taxon>Spermatophyta</taxon>
        <taxon>Magnoliopsida</taxon>
        <taxon>eudicotyledons</taxon>
        <taxon>Gunneridae</taxon>
        <taxon>Pentapetalae</taxon>
        <taxon>asterids</taxon>
        <taxon>campanulids</taxon>
        <taxon>Apiales</taxon>
        <taxon>Araliaceae</taxon>
        <taxon>Panax</taxon>
    </lineage>
</organism>
<proteinExistence type="inferred from homology"/>
<protein>
    <recommendedName>
        <fullName evidence="1">Photosystem II protein D1</fullName>
        <shortName evidence="1">PSII D1 protein</shortName>
        <ecNumber evidence="1">1.10.3.9</ecNumber>
    </recommendedName>
    <alternativeName>
        <fullName evidence="1">Photosystem II Q(B) protein</fullName>
    </alternativeName>
</protein>
<keyword id="KW-0007">Acetylation</keyword>
<keyword id="KW-0106">Calcium</keyword>
<keyword id="KW-0148">Chlorophyll</keyword>
<keyword id="KW-0150">Chloroplast</keyword>
<keyword id="KW-0157">Chromophore</keyword>
<keyword id="KW-0249">Electron transport</keyword>
<keyword id="KW-0359">Herbicide resistance</keyword>
<keyword id="KW-0408">Iron</keyword>
<keyword id="KW-0460">Magnesium</keyword>
<keyword id="KW-0464">Manganese</keyword>
<keyword id="KW-0472">Membrane</keyword>
<keyword id="KW-0479">Metal-binding</keyword>
<keyword id="KW-0560">Oxidoreductase</keyword>
<keyword id="KW-0597">Phosphoprotein</keyword>
<keyword id="KW-0602">Photosynthesis</keyword>
<keyword id="KW-0604">Photosystem II</keyword>
<keyword id="KW-0934">Plastid</keyword>
<keyword id="KW-0793">Thylakoid</keyword>
<keyword id="KW-0812">Transmembrane</keyword>
<keyword id="KW-1133">Transmembrane helix</keyword>
<keyword id="KW-0813">Transport</keyword>
<feature type="initiator methionine" description="Removed" evidence="1">
    <location>
        <position position="1"/>
    </location>
</feature>
<feature type="chain" id="PRO_0000340046" description="Photosystem II protein D1" evidence="1">
    <location>
        <begin position="2"/>
        <end position="344"/>
    </location>
</feature>
<feature type="propeptide" id="PRO_0000340047" evidence="1">
    <location>
        <begin position="345"/>
        <end position="353"/>
    </location>
</feature>
<feature type="transmembrane region" description="Helical" evidence="1">
    <location>
        <begin position="29"/>
        <end position="46"/>
    </location>
</feature>
<feature type="transmembrane region" description="Helical" evidence="1">
    <location>
        <begin position="118"/>
        <end position="133"/>
    </location>
</feature>
<feature type="transmembrane region" description="Helical" evidence="1">
    <location>
        <begin position="142"/>
        <end position="156"/>
    </location>
</feature>
<feature type="transmembrane region" description="Helical" evidence="1">
    <location>
        <begin position="197"/>
        <end position="218"/>
    </location>
</feature>
<feature type="transmembrane region" description="Helical" evidence="1">
    <location>
        <begin position="274"/>
        <end position="288"/>
    </location>
</feature>
<feature type="binding site" description="axial binding residue" evidence="1">
    <location>
        <position position="118"/>
    </location>
    <ligand>
        <name>chlorophyll a</name>
        <dbReference type="ChEBI" id="CHEBI:58416"/>
        <label>ChlzD1</label>
    </ligand>
    <ligandPart>
        <name>Mg</name>
        <dbReference type="ChEBI" id="CHEBI:25107"/>
    </ligandPart>
</feature>
<feature type="binding site" evidence="1">
    <location>
        <position position="126"/>
    </location>
    <ligand>
        <name>pheophytin a</name>
        <dbReference type="ChEBI" id="CHEBI:136840"/>
        <label>D1</label>
    </ligand>
</feature>
<feature type="binding site" evidence="1">
    <location>
        <position position="170"/>
    </location>
    <ligand>
        <name>[CaMn4O5] cluster</name>
        <dbReference type="ChEBI" id="CHEBI:189552"/>
    </ligand>
</feature>
<feature type="binding site" evidence="1">
    <location>
        <position position="189"/>
    </location>
    <ligand>
        <name>[CaMn4O5] cluster</name>
        <dbReference type="ChEBI" id="CHEBI:189552"/>
    </ligand>
</feature>
<feature type="binding site" description="axial binding residue" evidence="1">
    <location>
        <position position="198"/>
    </location>
    <ligand>
        <name>chlorophyll a</name>
        <dbReference type="ChEBI" id="CHEBI:58416"/>
        <label>PD1</label>
    </ligand>
    <ligandPart>
        <name>Mg</name>
        <dbReference type="ChEBI" id="CHEBI:25107"/>
    </ligandPart>
</feature>
<feature type="binding site" evidence="1">
    <location>
        <position position="215"/>
    </location>
    <ligand>
        <name>a quinone</name>
        <dbReference type="ChEBI" id="CHEBI:132124"/>
        <label>B</label>
    </ligand>
</feature>
<feature type="binding site" evidence="1">
    <location>
        <position position="215"/>
    </location>
    <ligand>
        <name>Fe cation</name>
        <dbReference type="ChEBI" id="CHEBI:24875"/>
        <note>ligand shared with heterodimeric partner</note>
    </ligand>
</feature>
<feature type="binding site" evidence="1">
    <location>
        <begin position="264"/>
        <end position="265"/>
    </location>
    <ligand>
        <name>a quinone</name>
        <dbReference type="ChEBI" id="CHEBI:132124"/>
        <label>B</label>
    </ligand>
</feature>
<feature type="binding site" evidence="1">
    <location>
        <position position="272"/>
    </location>
    <ligand>
        <name>Fe cation</name>
        <dbReference type="ChEBI" id="CHEBI:24875"/>
        <note>ligand shared with heterodimeric partner</note>
    </ligand>
</feature>
<feature type="binding site" evidence="1">
    <location>
        <position position="332"/>
    </location>
    <ligand>
        <name>[CaMn4O5] cluster</name>
        <dbReference type="ChEBI" id="CHEBI:189552"/>
    </ligand>
</feature>
<feature type="binding site" evidence="1">
    <location>
        <position position="333"/>
    </location>
    <ligand>
        <name>[CaMn4O5] cluster</name>
        <dbReference type="ChEBI" id="CHEBI:189552"/>
    </ligand>
</feature>
<feature type="binding site" evidence="1">
    <location>
        <position position="342"/>
    </location>
    <ligand>
        <name>[CaMn4O5] cluster</name>
        <dbReference type="ChEBI" id="CHEBI:189552"/>
    </ligand>
</feature>
<feature type="binding site" evidence="1">
    <location>
        <position position="344"/>
    </location>
    <ligand>
        <name>[CaMn4O5] cluster</name>
        <dbReference type="ChEBI" id="CHEBI:189552"/>
    </ligand>
</feature>
<feature type="site" description="Tyrosine radical intermediate" evidence="1">
    <location>
        <position position="161"/>
    </location>
</feature>
<feature type="site" description="Stabilizes free radical intermediate" evidence="1">
    <location>
        <position position="190"/>
    </location>
</feature>
<feature type="site" description="Cleavage; by CTPA" evidence="1">
    <location>
        <begin position="344"/>
        <end position="345"/>
    </location>
</feature>
<feature type="modified residue" description="N-acetylthreonine" evidence="1">
    <location>
        <position position="2"/>
    </location>
</feature>
<feature type="modified residue" description="Phosphothreonine" evidence="1">
    <location>
        <position position="2"/>
    </location>
</feature>
<name>PSBA_PANGI</name>
<evidence type="ECO:0000255" key="1">
    <source>
        <dbReference type="HAMAP-Rule" id="MF_01379"/>
    </source>
</evidence>
<sequence length="353" mass="38907">MTAILERRESESLWGRFCNWITSTENRLYIGWFGVLMIPTLLTATSVFIIAFIAAPPVDIDGIREPVSGSLLYGNNIISGAIIPTSAAIGLHFYPIWEAASVDEWLYNGGPYELIVLHFLLGVACYMGREWELSFRLGMRPWIAVAYSAPVAAAAAVFLIYPIGQGSFSDGMPLGISGTFNFMIVFQAEHNILMHPFHMLGVAGVFGGSLFSAMHGSLVTSSLIRETTENESANEGYRFGQEEETYNIVAAHGYFGRLIFQYASFNNSRSLHFFLAAWPVVGIWFTALGISTMAFNLNGFNFNQSVVDSQGRVINTWADIINRANLGMEVMHERNAHNFPLDLAAVEAPSTNG</sequence>
<gene>
    <name evidence="1" type="primary">psbA</name>
    <name type="ORF">PSC0004</name>
</gene>
<dbReference type="EC" id="1.10.3.9" evidence="1"/>
<dbReference type="EMBL" id="AY582139">
    <property type="protein sequence ID" value="AAT98489.1"/>
    <property type="molecule type" value="Genomic_DNA"/>
</dbReference>
<dbReference type="RefSeq" id="YP_086946.1">
    <property type="nucleotide sequence ID" value="NC_006290.1"/>
</dbReference>
<dbReference type="SMR" id="Q68S26"/>
<dbReference type="GeneID" id="3021526"/>
<dbReference type="GO" id="GO:0009535">
    <property type="term" value="C:chloroplast thylakoid membrane"/>
    <property type="evidence" value="ECO:0007669"/>
    <property type="project" value="UniProtKB-SubCell"/>
</dbReference>
<dbReference type="GO" id="GO:0009523">
    <property type="term" value="C:photosystem II"/>
    <property type="evidence" value="ECO:0007669"/>
    <property type="project" value="UniProtKB-KW"/>
</dbReference>
<dbReference type="GO" id="GO:0016168">
    <property type="term" value="F:chlorophyll binding"/>
    <property type="evidence" value="ECO:0007669"/>
    <property type="project" value="UniProtKB-UniRule"/>
</dbReference>
<dbReference type="GO" id="GO:0045156">
    <property type="term" value="F:electron transporter, transferring electrons within the cyclic electron transport pathway of photosynthesis activity"/>
    <property type="evidence" value="ECO:0007669"/>
    <property type="project" value="InterPro"/>
</dbReference>
<dbReference type="GO" id="GO:0005506">
    <property type="term" value="F:iron ion binding"/>
    <property type="evidence" value="ECO:0007669"/>
    <property type="project" value="UniProtKB-UniRule"/>
</dbReference>
<dbReference type="GO" id="GO:0016682">
    <property type="term" value="F:oxidoreductase activity, acting on diphenols and related substances as donors, oxygen as acceptor"/>
    <property type="evidence" value="ECO:0007669"/>
    <property type="project" value="UniProtKB-UniRule"/>
</dbReference>
<dbReference type="GO" id="GO:0010242">
    <property type="term" value="F:oxygen evolving activity"/>
    <property type="evidence" value="ECO:0007669"/>
    <property type="project" value="UniProtKB-EC"/>
</dbReference>
<dbReference type="GO" id="GO:0009772">
    <property type="term" value="P:photosynthetic electron transport in photosystem II"/>
    <property type="evidence" value="ECO:0007669"/>
    <property type="project" value="InterPro"/>
</dbReference>
<dbReference type="GO" id="GO:0009635">
    <property type="term" value="P:response to herbicide"/>
    <property type="evidence" value="ECO:0007669"/>
    <property type="project" value="UniProtKB-KW"/>
</dbReference>
<dbReference type="CDD" id="cd09289">
    <property type="entry name" value="Photosystem-II_D1"/>
    <property type="match status" value="1"/>
</dbReference>
<dbReference type="FunFam" id="1.20.85.10:FF:000002">
    <property type="entry name" value="Photosystem II protein D1"/>
    <property type="match status" value="1"/>
</dbReference>
<dbReference type="Gene3D" id="1.20.85.10">
    <property type="entry name" value="Photosystem II protein D1-like"/>
    <property type="match status" value="1"/>
</dbReference>
<dbReference type="HAMAP" id="MF_01379">
    <property type="entry name" value="PSII_PsbA_D1"/>
    <property type="match status" value="1"/>
</dbReference>
<dbReference type="InterPro" id="IPR055266">
    <property type="entry name" value="D1/D2"/>
</dbReference>
<dbReference type="InterPro" id="IPR036854">
    <property type="entry name" value="Photo_II_D1/D2_sf"/>
</dbReference>
<dbReference type="InterPro" id="IPR000484">
    <property type="entry name" value="Photo_RC_L/M"/>
</dbReference>
<dbReference type="InterPro" id="IPR055265">
    <property type="entry name" value="Photo_RC_L/M_CS"/>
</dbReference>
<dbReference type="InterPro" id="IPR005867">
    <property type="entry name" value="PSII_D1"/>
</dbReference>
<dbReference type="NCBIfam" id="TIGR01151">
    <property type="entry name" value="psbA"/>
    <property type="match status" value="1"/>
</dbReference>
<dbReference type="PANTHER" id="PTHR33149">
    <property type="entry name" value="PHOTOSYSTEM II PROTEIN D1"/>
    <property type="match status" value="1"/>
</dbReference>
<dbReference type="PANTHER" id="PTHR33149:SF55">
    <property type="entry name" value="PHOTOSYSTEM II PROTEIN D1"/>
    <property type="match status" value="1"/>
</dbReference>
<dbReference type="Pfam" id="PF00124">
    <property type="entry name" value="Photo_RC"/>
    <property type="match status" value="1"/>
</dbReference>
<dbReference type="PRINTS" id="PR00256">
    <property type="entry name" value="REACTNCENTRE"/>
</dbReference>
<dbReference type="SUPFAM" id="SSF81483">
    <property type="entry name" value="Bacterial photosystem II reaction centre, L and M subunits"/>
    <property type="match status" value="1"/>
</dbReference>
<dbReference type="PROSITE" id="PS00244">
    <property type="entry name" value="REACTION_CENTER"/>
    <property type="match status" value="1"/>
</dbReference>
<accession>Q68S26</accession>
<geneLocation type="chloroplast"/>
<reference key="1">
    <citation type="journal article" date="2004" name="DNA Res.">
        <title>Complete chloroplast genome sequence from Korea ginseng (Panax schinseng Nees) and comparative analysis of sequence evolution among 17 vascular plants.</title>
        <authorList>
            <person name="Kim K.-J."/>
            <person name="Lee H.-L."/>
        </authorList>
    </citation>
    <scope>NUCLEOTIDE SEQUENCE [LARGE SCALE GENOMIC DNA]</scope>
</reference>